<keyword id="KW-1003">Cell membrane</keyword>
<keyword id="KW-0472">Membrane</keyword>
<keyword id="KW-0812">Transmembrane</keyword>
<keyword id="KW-1133">Transmembrane helix</keyword>
<name>Y1836_CLOP1</name>
<evidence type="ECO:0000255" key="1">
    <source>
        <dbReference type="HAMAP-Rule" id="MF_01572"/>
    </source>
</evidence>
<accession>Q0TQ20</accession>
<sequence length="185" mass="20032">MKKNKLSIKTIVAIGIGSAVFMILGRFGSLPTGIPNTNIETAYAFLALMALLYGPLAGFLIGFIGHALKDIVFFGSPWISWVFASGIVGLIIGFGARFIKINQGVFKLKQIFMFNLIQIIANGVAWFLVAPTLDILIYSEPANKVYLQGVIGGISNMVTVGVLGTILIANYAKTRIQKGSLRKEY</sequence>
<comment type="subcellular location">
    <subcellularLocation>
        <location evidence="1">Cell membrane</location>
        <topology evidence="1">Multi-pass membrane protein</topology>
    </subcellularLocation>
</comment>
<comment type="similarity">
    <text evidence="1">Belongs to the UPF0397 family.</text>
</comment>
<dbReference type="EMBL" id="CP000246">
    <property type="protein sequence ID" value="ABG84092.1"/>
    <property type="molecule type" value="Genomic_DNA"/>
</dbReference>
<dbReference type="RefSeq" id="WP_003456002.1">
    <property type="nucleotide sequence ID" value="NC_008261.1"/>
</dbReference>
<dbReference type="STRING" id="195103.CPF_1836"/>
<dbReference type="PaxDb" id="195103-CPF_1836"/>
<dbReference type="KEGG" id="cpf:CPF_1836"/>
<dbReference type="eggNOG" id="COG4720">
    <property type="taxonomic scope" value="Bacteria"/>
</dbReference>
<dbReference type="HOGENOM" id="CLU_120023_0_0_9"/>
<dbReference type="Proteomes" id="UP000001823">
    <property type="component" value="Chromosome"/>
</dbReference>
<dbReference type="GO" id="GO:0005886">
    <property type="term" value="C:plasma membrane"/>
    <property type="evidence" value="ECO:0007669"/>
    <property type="project" value="UniProtKB-SubCell"/>
</dbReference>
<dbReference type="Gene3D" id="1.10.1760.20">
    <property type="match status" value="1"/>
</dbReference>
<dbReference type="HAMAP" id="MF_01572">
    <property type="entry name" value="UPF0397"/>
    <property type="match status" value="1"/>
</dbReference>
<dbReference type="InterPro" id="IPR009825">
    <property type="entry name" value="ECF_substrate-spec-like"/>
</dbReference>
<dbReference type="InterPro" id="IPR022914">
    <property type="entry name" value="UPF0397"/>
</dbReference>
<dbReference type="NCBIfam" id="NF010182">
    <property type="entry name" value="PRK13661.1"/>
    <property type="match status" value="1"/>
</dbReference>
<dbReference type="PANTHER" id="PTHR37815">
    <property type="entry name" value="UPF0397 PROTEIN BC_2624-RELATED"/>
    <property type="match status" value="1"/>
</dbReference>
<dbReference type="PANTHER" id="PTHR37815:SF3">
    <property type="entry name" value="UPF0397 PROTEIN SPR0429"/>
    <property type="match status" value="1"/>
</dbReference>
<dbReference type="Pfam" id="PF07155">
    <property type="entry name" value="ECF-ribofla_trS"/>
    <property type="match status" value="1"/>
</dbReference>
<gene>
    <name type="ordered locus">CPF_1836</name>
</gene>
<protein>
    <recommendedName>
        <fullName evidence="1">UPF0397 protein CPF_1836</fullName>
    </recommendedName>
</protein>
<proteinExistence type="inferred from homology"/>
<reference key="1">
    <citation type="journal article" date="2006" name="Genome Res.">
        <title>Skewed genomic variability in strains of the toxigenic bacterial pathogen, Clostridium perfringens.</title>
        <authorList>
            <person name="Myers G.S.A."/>
            <person name="Rasko D.A."/>
            <person name="Cheung J.K."/>
            <person name="Ravel J."/>
            <person name="Seshadri R."/>
            <person name="DeBoy R.T."/>
            <person name="Ren Q."/>
            <person name="Varga J."/>
            <person name="Awad M.M."/>
            <person name="Brinkac L.M."/>
            <person name="Daugherty S.C."/>
            <person name="Haft D.H."/>
            <person name="Dodson R.J."/>
            <person name="Madupu R."/>
            <person name="Nelson W.C."/>
            <person name="Rosovitz M.J."/>
            <person name="Sullivan S.A."/>
            <person name="Khouri H."/>
            <person name="Dimitrov G.I."/>
            <person name="Watkins K.L."/>
            <person name="Mulligan S."/>
            <person name="Benton J."/>
            <person name="Radune D."/>
            <person name="Fisher D.J."/>
            <person name="Atkins H.S."/>
            <person name="Hiscox T."/>
            <person name="Jost B.H."/>
            <person name="Billington S.J."/>
            <person name="Songer J.G."/>
            <person name="McClane B.A."/>
            <person name="Titball R.W."/>
            <person name="Rood J.I."/>
            <person name="Melville S.B."/>
            <person name="Paulsen I.T."/>
        </authorList>
    </citation>
    <scope>NUCLEOTIDE SEQUENCE [LARGE SCALE GENOMIC DNA]</scope>
    <source>
        <strain>ATCC 13124 / DSM 756 / JCM 1290 / NCIMB 6125 / NCTC 8237 / S 107 / Type A</strain>
    </source>
</reference>
<organism>
    <name type="scientific">Clostridium perfringens (strain ATCC 13124 / DSM 756 / JCM 1290 / NCIMB 6125 / NCTC 8237 / Type A)</name>
    <dbReference type="NCBI Taxonomy" id="195103"/>
    <lineage>
        <taxon>Bacteria</taxon>
        <taxon>Bacillati</taxon>
        <taxon>Bacillota</taxon>
        <taxon>Clostridia</taxon>
        <taxon>Eubacteriales</taxon>
        <taxon>Clostridiaceae</taxon>
        <taxon>Clostridium</taxon>
    </lineage>
</organism>
<feature type="chain" id="PRO_0000260789" description="UPF0397 protein CPF_1836">
    <location>
        <begin position="1"/>
        <end position="185"/>
    </location>
</feature>
<feature type="transmembrane region" description="Helical" evidence="1">
    <location>
        <begin position="11"/>
        <end position="31"/>
    </location>
</feature>
<feature type="transmembrane region" description="Helical" evidence="1">
    <location>
        <begin position="44"/>
        <end position="64"/>
    </location>
</feature>
<feature type="transmembrane region" description="Helical" evidence="1">
    <location>
        <begin position="71"/>
        <end position="91"/>
    </location>
</feature>
<feature type="transmembrane region" description="Helical" evidence="1">
    <location>
        <begin position="111"/>
        <end position="131"/>
    </location>
</feature>
<feature type="transmembrane region" description="Helical" evidence="1">
    <location>
        <begin position="149"/>
        <end position="169"/>
    </location>
</feature>